<reference key="1">
    <citation type="journal article" date="2009" name="J. Bacteriol.">
        <title>Genome sequences of three Agrobacterium biovars help elucidate the evolution of multichromosome genomes in bacteria.</title>
        <authorList>
            <person name="Slater S.C."/>
            <person name="Goldman B.S."/>
            <person name="Goodner B."/>
            <person name="Setubal J.C."/>
            <person name="Farrand S.K."/>
            <person name="Nester E.W."/>
            <person name="Burr T.J."/>
            <person name="Banta L."/>
            <person name="Dickerman A.W."/>
            <person name="Paulsen I."/>
            <person name="Otten L."/>
            <person name="Suen G."/>
            <person name="Welch R."/>
            <person name="Almeida N.F."/>
            <person name="Arnold F."/>
            <person name="Burton O.T."/>
            <person name="Du Z."/>
            <person name="Ewing A."/>
            <person name="Godsy E."/>
            <person name="Heisel S."/>
            <person name="Houmiel K.L."/>
            <person name="Jhaveri J."/>
            <person name="Lu J."/>
            <person name="Miller N.M."/>
            <person name="Norton S."/>
            <person name="Chen Q."/>
            <person name="Phoolcharoen W."/>
            <person name="Ohlin V."/>
            <person name="Ondrusek D."/>
            <person name="Pride N."/>
            <person name="Stricklin S.L."/>
            <person name="Sun J."/>
            <person name="Wheeler C."/>
            <person name="Wilson L."/>
            <person name="Zhu H."/>
            <person name="Wood D.W."/>
        </authorList>
    </citation>
    <scope>NUCLEOTIDE SEQUENCE [LARGE SCALE GENOMIC DNA]</scope>
    <source>
        <strain>ATCC BAA-846 / DSM 112012 / S4</strain>
    </source>
</reference>
<comment type="function">
    <text evidence="1">Formation of pseudouridine at positions 38, 39 and 40 in the anticodon stem and loop of transfer RNAs.</text>
</comment>
<comment type="catalytic activity">
    <reaction evidence="1">
        <text>uridine(38/39/40) in tRNA = pseudouridine(38/39/40) in tRNA</text>
        <dbReference type="Rhea" id="RHEA:22376"/>
        <dbReference type="Rhea" id="RHEA-COMP:10085"/>
        <dbReference type="Rhea" id="RHEA-COMP:10087"/>
        <dbReference type="ChEBI" id="CHEBI:65314"/>
        <dbReference type="ChEBI" id="CHEBI:65315"/>
        <dbReference type="EC" id="5.4.99.12"/>
    </reaction>
</comment>
<comment type="subunit">
    <text evidence="1">Homodimer.</text>
</comment>
<comment type="similarity">
    <text evidence="1">Belongs to the tRNA pseudouridine synthase TruA family.</text>
</comment>
<name>TRUA_ALLAM</name>
<proteinExistence type="inferred from homology"/>
<protein>
    <recommendedName>
        <fullName evidence="1">tRNA pseudouridine synthase A</fullName>
        <ecNumber evidence="1">5.4.99.12</ecNumber>
    </recommendedName>
    <alternativeName>
        <fullName evidence="1">tRNA pseudouridine(38-40) synthase</fullName>
    </alternativeName>
    <alternativeName>
        <fullName evidence="1">tRNA pseudouridylate synthase I</fullName>
    </alternativeName>
    <alternativeName>
        <fullName evidence="1">tRNA-uridine isomerase I</fullName>
    </alternativeName>
</protein>
<accession>B9JQX0</accession>
<organism>
    <name type="scientific">Allorhizobium ampelinum (strain ATCC BAA-846 / DSM 112012 / S4)</name>
    <name type="common">Agrobacterium vitis (strain S4)</name>
    <dbReference type="NCBI Taxonomy" id="311402"/>
    <lineage>
        <taxon>Bacteria</taxon>
        <taxon>Pseudomonadati</taxon>
        <taxon>Pseudomonadota</taxon>
        <taxon>Alphaproteobacteria</taxon>
        <taxon>Hyphomicrobiales</taxon>
        <taxon>Rhizobiaceae</taxon>
        <taxon>Rhizobium/Agrobacterium group</taxon>
        <taxon>Allorhizobium</taxon>
        <taxon>Allorhizobium ampelinum</taxon>
    </lineage>
</organism>
<sequence>MPRYKLTVEYDGTPYVGWQRQDNGPSVQGALEAAVLGLTGETVAIRGAGRTDSGVHASGQVAHVDLLRQWIPYKLRNALNAHLAQAGQAISILAAEAVPDAFDARFSALKRHYLYRIMSRPSRLALEANRAWWVSKPLDHEAMHAAAQMLVGNHDFTTFRSVHCQAISPVRTLDRLDVSRNGDLIEIRASAQSFLHNQIRSFAGTLKMAGEGKMTPEDVRAALEARDRKACGPVAPPQGLYFLQVDYPTDGNWRPYSKT</sequence>
<gene>
    <name evidence="1" type="primary">truA</name>
    <name type="ordered locus">Avi_0540</name>
</gene>
<feature type="chain" id="PRO_1000194524" description="tRNA pseudouridine synthase A">
    <location>
        <begin position="1"/>
        <end position="259"/>
    </location>
</feature>
<feature type="active site" description="Nucleophile" evidence="1">
    <location>
        <position position="52"/>
    </location>
</feature>
<feature type="binding site" evidence="1">
    <location>
        <position position="113"/>
    </location>
    <ligand>
        <name>substrate</name>
    </ligand>
</feature>
<evidence type="ECO:0000255" key="1">
    <source>
        <dbReference type="HAMAP-Rule" id="MF_00171"/>
    </source>
</evidence>
<keyword id="KW-0413">Isomerase</keyword>
<keyword id="KW-1185">Reference proteome</keyword>
<keyword id="KW-0819">tRNA processing</keyword>
<dbReference type="EC" id="5.4.99.12" evidence="1"/>
<dbReference type="EMBL" id="CP000633">
    <property type="protein sequence ID" value="ACM35383.1"/>
    <property type="molecule type" value="Genomic_DNA"/>
</dbReference>
<dbReference type="RefSeq" id="WP_015914811.1">
    <property type="nucleotide sequence ID" value="NC_011989.1"/>
</dbReference>
<dbReference type="SMR" id="B9JQX0"/>
<dbReference type="STRING" id="311402.Avi_0540"/>
<dbReference type="KEGG" id="avi:Avi_0540"/>
<dbReference type="eggNOG" id="COG0101">
    <property type="taxonomic scope" value="Bacteria"/>
</dbReference>
<dbReference type="HOGENOM" id="CLU_014673_0_2_5"/>
<dbReference type="Proteomes" id="UP000001596">
    <property type="component" value="Chromosome 1"/>
</dbReference>
<dbReference type="GO" id="GO:0003723">
    <property type="term" value="F:RNA binding"/>
    <property type="evidence" value="ECO:0007669"/>
    <property type="project" value="InterPro"/>
</dbReference>
<dbReference type="GO" id="GO:0160147">
    <property type="term" value="F:tRNA pseudouridine(38-40) synthase activity"/>
    <property type="evidence" value="ECO:0007669"/>
    <property type="project" value="UniProtKB-EC"/>
</dbReference>
<dbReference type="GO" id="GO:0031119">
    <property type="term" value="P:tRNA pseudouridine synthesis"/>
    <property type="evidence" value="ECO:0007669"/>
    <property type="project" value="UniProtKB-UniRule"/>
</dbReference>
<dbReference type="CDD" id="cd02570">
    <property type="entry name" value="PseudoU_synth_EcTruA"/>
    <property type="match status" value="1"/>
</dbReference>
<dbReference type="FunFam" id="3.30.70.580:FF:000001">
    <property type="entry name" value="tRNA pseudouridine synthase A"/>
    <property type="match status" value="1"/>
</dbReference>
<dbReference type="Gene3D" id="3.30.70.660">
    <property type="entry name" value="Pseudouridine synthase I, catalytic domain, C-terminal subdomain"/>
    <property type="match status" value="1"/>
</dbReference>
<dbReference type="Gene3D" id="3.30.70.580">
    <property type="entry name" value="Pseudouridine synthase I, catalytic domain, N-terminal subdomain"/>
    <property type="match status" value="1"/>
</dbReference>
<dbReference type="HAMAP" id="MF_00171">
    <property type="entry name" value="TruA"/>
    <property type="match status" value="1"/>
</dbReference>
<dbReference type="InterPro" id="IPR020103">
    <property type="entry name" value="PsdUridine_synth_cat_dom_sf"/>
</dbReference>
<dbReference type="InterPro" id="IPR001406">
    <property type="entry name" value="PsdUridine_synth_TruA"/>
</dbReference>
<dbReference type="InterPro" id="IPR020097">
    <property type="entry name" value="PsdUridine_synth_TruA_a/b_dom"/>
</dbReference>
<dbReference type="InterPro" id="IPR020095">
    <property type="entry name" value="PsdUridine_synth_TruA_C"/>
</dbReference>
<dbReference type="InterPro" id="IPR020094">
    <property type="entry name" value="TruA/RsuA/RluB/E/F_N"/>
</dbReference>
<dbReference type="NCBIfam" id="TIGR00071">
    <property type="entry name" value="hisT_truA"/>
    <property type="match status" value="1"/>
</dbReference>
<dbReference type="PANTHER" id="PTHR11142">
    <property type="entry name" value="PSEUDOURIDYLATE SYNTHASE"/>
    <property type="match status" value="1"/>
</dbReference>
<dbReference type="PANTHER" id="PTHR11142:SF0">
    <property type="entry name" value="TRNA PSEUDOURIDINE SYNTHASE-LIKE 1"/>
    <property type="match status" value="1"/>
</dbReference>
<dbReference type="Pfam" id="PF01416">
    <property type="entry name" value="PseudoU_synth_1"/>
    <property type="match status" value="2"/>
</dbReference>
<dbReference type="PIRSF" id="PIRSF001430">
    <property type="entry name" value="tRNA_psdUrid_synth"/>
    <property type="match status" value="1"/>
</dbReference>
<dbReference type="SUPFAM" id="SSF55120">
    <property type="entry name" value="Pseudouridine synthase"/>
    <property type="match status" value="1"/>
</dbReference>